<sequence>MDYLTIILTLLFALTLYEAFSYLSRRTKNLPPGPSPLPFIGSLHLLGDQPHKSLAKLSKKHGPIMSLKLGQITTIVISSSTMAKEVLQKQDLAFSSRSVPNALHAHNQFKFSVVWLPVASRWRSLRKVLNSNIFSGNRLDANQHLRTRKVQELIAYCRKNSQSGEAVDVGRAAFRTSLNLLSNLIFSKDLTDPYSDSAKEFKDLVWNIMVEAGKPNLVDFFPLLEKVDPQGIRHRMTIHFGEVLKLFGGLVNERLEQRRSKGEKNDVLDVLLTTSQESPEEIDRTHIERMCLDLFVAGTDTTSSTLEWAMSEMLKNPDKMKKTQDELAQVIGRGKTIEESDINRLPYLRCVMKETLRIHPPVPFLIPRKVEQSVEVCGYNVPKGSQVLVNAWAIGRDETVWDDALAFKPERFMESELDIRGRDFELIPFGAGRRICPGLPLALRTVPLMLGSLLNSFNWKLEGGMAPKDLDMEEKFGITLQKAHPLRAVPSTL</sequence>
<dbReference type="EC" id="1.14.14.83" evidence="3 6"/>
<dbReference type="EMBL" id="AJ251269">
    <property type="protein sequence ID" value="CAC80883.1"/>
    <property type="molecule type" value="mRNA"/>
</dbReference>
<dbReference type="SMR" id="Q8VWZ7"/>
<dbReference type="KEGG" id="ag:CAC80883"/>
<dbReference type="OrthoDB" id="2789670at2759"/>
<dbReference type="BioCyc" id="MetaCyc:MONOMER-12352"/>
<dbReference type="BRENDA" id="1.14.14.83">
    <property type="organism ID" value="1211"/>
</dbReference>
<dbReference type="SABIO-RK" id="Q8VWZ7"/>
<dbReference type="GO" id="GO:0005789">
    <property type="term" value="C:endoplasmic reticulum membrane"/>
    <property type="evidence" value="ECO:0007669"/>
    <property type="project" value="UniProtKB-SubCell"/>
</dbReference>
<dbReference type="GO" id="GO:0102811">
    <property type="term" value="F:geraniol 10-hydroxylase activity"/>
    <property type="evidence" value="ECO:0007669"/>
    <property type="project" value="UniProtKB-EC"/>
</dbReference>
<dbReference type="GO" id="GO:0020037">
    <property type="term" value="F:heme binding"/>
    <property type="evidence" value="ECO:0007669"/>
    <property type="project" value="InterPro"/>
</dbReference>
<dbReference type="GO" id="GO:0005506">
    <property type="term" value="F:iron ion binding"/>
    <property type="evidence" value="ECO:0007669"/>
    <property type="project" value="InterPro"/>
</dbReference>
<dbReference type="GO" id="GO:0016709">
    <property type="term" value="F:oxidoreductase activity, acting on paired donors, with incorporation or reduction of molecular oxygen, NAD(P)H as one donor, and incorporation of one atom of oxygen"/>
    <property type="evidence" value="ECO:0000314"/>
    <property type="project" value="UniProtKB"/>
</dbReference>
<dbReference type="GO" id="GO:0016099">
    <property type="term" value="P:monoterpenoid biosynthetic process"/>
    <property type="evidence" value="ECO:0000314"/>
    <property type="project" value="UniProtKB"/>
</dbReference>
<dbReference type="CDD" id="cd11073">
    <property type="entry name" value="CYP76-like"/>
    <property type="match status" value="1"/>
</dbReference>
<dbReference type="FunFam" id="1.10.630.10:FF:000007">
    <property type="entry name" value="Cytochrome P450 76C4"/>
    <property type="match status" value="1"/>
</dbReference>
<dbReference type="Gene3D" id="1.10.630.10">
    <property type="entry name" value="Cytochrome P450"/>
    <property type="match status" value="1"/>
</dbReference>
<dbReference type="InterPro" id="IPR001128">
    <property type="entry name" value="Cyt_P450"/>
</dbReference>
<dbReference type="InterPro" id="IPR017972">
    <property type="entry name" value="Cyt_P450_CS"/>
</dbReference>
<dbReference type="InterPro" id="IPR002401">
    <property type="entry name" value="Cyt_P450_E_grp-I"/>
</dbReference>
<dbReference type="InterPro" id="IPR036396">
    <property type="entry name" value="Cyt_P450_sf"/>
</dbReference>
<dbReference type="PANTHER" id="PTHR47950">
    <property type="entry name" value="CYTOCHROME P450, FAMILY 76, SUBFAMILY C, POLYPEPTIDE 5-RELATED"/>
    <property type="match status" value="1"/>
</dbReference>
<dbReference type="PANTHER" id="PTHR47950:SF4">
    <property type="entry name" value="GERANIOL 8-HYDROXYLASE-LIKE"/>
    <property type="match status" value="1"/>
</dbReference>
<dbReference type="Pfam" id="PF00067">
    <property type="entry name" value="p450"/>
    <property type="match status" value="1"/>
</dbReference>
<dbReference type="PRINTS" id="PR00463">
    <property type="entry name" value="EP450I"/>
</dbReference>
<dbReference type="PRINTS" id="PR00385">
    <property type="entry name" value="P450"/>
</dbReference>
<dbReference type="SUPFAM" id="SSF48264">
    <property type="entry name" value="Cytochrome P450"/>
    <property type="match status" value="1"/>
</dbReference>
<dbReference type="PROSITE" id="PS00086">
    <property type="entry name" value="CYTOCHROME_P450"/>
    <property type="match status" value="1"/>
</dbReference>
<accession>Q8VWZ7</accession>
<proteinExistence type="evidence at protein level"/>
<protein>
    <recommendedName>
        <fullName>Geraniol 8-hydroxylase</fullName>
        <ecNumber evidence="3 6">1.14.14.83</ecNumber>
    </recommendedName>
    <alternativeName>
        <fullName>Cytochrome P450 76B6</fullName>
    </alternativeName>
    <alternativeName>
        <fullName>Geraniol 10-hydroxylase</fullName>
        <shortName>CrG10H</shortName>
    </alternativeName>
</protein>
<reference key="1">
    <citation type="journal article" date="2001" name="FEBS Lett.">
        <title>Geraniol 10-hydroxylase, a cytochrome P450 enzyme involved in terpenoid indole alkaloid biosynthesis.</title>
        <authorList>
            <person name="Collu G."/>
            <person name="Unver N."/>
            <person name="Peltenburg-Looman A.M."/>
            <person name="van der Heijden R."/>
            <person name="Verpoorte R."/>
            <person name="Memelink J."/>
        </authorList>
    </citation>
    <scope>NUCLEOTIDE SEQUENCE [MRNA]</scope>
    <scope>PROTEIN SEQUENCE OF 337-349</scope>
    <scope>FUNCTION</scope>
    <scope>CATALYTIC ACTIVITY</scope>
    <scope>INDUCTION</scope>
</reference>
<reference key="2">
    <citation type="journal article" date="2002" name="Plant Sci.">
        <title>Activity of the cytochrome P450 enzyme geraniol 10-hydroxylase and alkaloid production in plant cell cultures.</title>
        <authorList>
            <person name="Collu G."/>
            <person name="Garcia A.A."/>
            <person name="van der Heijden R."/>
            <person name="Verpoorte R."/>
        </authorList>
    </citation>
    <scope>FUNCTION</scope>
</reference>
<reference key="3">
    <citation type="journal article" date="2004" name="Plant J.">
        <title>Co-expression of three MEP pathway genes and geraniol 10-hydroxylase in internal phloem parenchyma of Catharanthus roseus implicates multicellular translocation of intermediates during the biosynthesis of monoterpene indole alkaloids and isoprenoid-derived primary metabolites.</title>
        <authorList>
            <person name="Burlat V."/>
            <person name="Oudin A."/>
            <person name="Courtois M."/>
            <person name="Rideau M."/>
            <person name="St-Pierre B."/>
        </authorList>
    </citation>
    <scope>TISSUE SPECIFICITY</scope>
</reference>
<reference key="4">
    <citation type="journal article" date="2009" name="Plant Cell Rep.">
        <title>Optimization of the transient transformation of Catharanthus roseus cells by particle bombardment and its application to the subcellular localization of hydroxymethylbutenyl 4-diphosphate synthase and geraniol 10-hydroxylase.</title>
        <authorList>
            <person name="Guirimand G."/>
            <person name="Burlat V."/>
            <person name="Oudin A."/>
            <person name="Lanoue A."/>
            <person name="St-Pierre B."/>
            <person name="Courdavault V."/>
        </authorList>
    </citation>
    <scope>SUBCELLULAR LOCATION</scope>
</reference>
<reference key="5">
    <citation type="journal article" date="2011" name="J. Agric. Food Chem.">
        <title>Functional expression of geraniol 10-hydroxylase reveals its dual function in the biosynthesis of terpenoid and phenylpropanoid.</title>
        <authorList>
            <person name="Sung P.H."/>
            <person name="Huang F.C."/>
            <person name="Do Y.Y."/>
            <person name="Huang P.L."/>
        </authorList>
    </citation>
    <scope>FUNCTION</scope>
    <scope>CATALYTIC ACTIVITY</scope>
    <scope>BIOPHYSICOCHEMICAL PROPERTIES</scope>
</reference>
<evidence type="ECO:0000250" key="1"/>
<evidence type="ECO:0000255" key="2"/>
<evidence type="ECO:0000269" key="3">
    <source>
    </source>
</evidence>
<evidence type="ECO:0000269" key="4">
    <source>
    </source>
</evidence>
<evidence type="ECO:0000269" key="5">
    <source>
    </source>
</evidence>
<evidence type="ECO:0000269" key="6">
    <source>
    </source>
</evidence>
<evidence type="ECO:0000269" key="7">
    <source ref="2"/>
</evidence>
<evidence type="ECO:0000305" key="8"/>
<name>C76B6_CATRO</name>
<gene>
    <name type="primary">CYP76B6</name>
    <name type="synonym">G10H</name>
</gene>
<feature type="chain" id="PRO_0000418919" description="Geraniol 8-hydroxylase">
    <location>
        <begin position="1"/>
        <end position="493"/>
    </location>
</feature>
<feature type="topological domain" description="Lumenal" evidence="2">
    <location>
        <begin position="1"/>
        <end position="6"/>
    </location>
</feature>
<feature type="transmembrane region" description="Helical" evidence="2">
    <location>
        <begin position="7"/>
        <end position="23"/>
    </location>
</feature>
<feature type="topological domain" description="Cytoplasmic" evidence="2">
    <location>
        <begin position="24"/>
        <end position="493"/>
    </location>
</feature>
<feature type="binding site" description="axial binding residue" evidence="1">
    <location>
        <position position="436"/>
    </location>
    <ligand>
        <name>heme</name>
        <dbReference type="ChEBI" id="CHEBI:30413"/>
    </ligand>
    <ligandPart>
        <name>Fe</name>
        <dbReference type="ChEBI" id="CHEBI:18248"/>
    </ligandPart>
</feature>
<comment type="function">
    <text evidence="3 6 7">Hydroxylase involved in the biosynthesis of hydroxygeraniol, a precursor of the terpenoid indole alkaloids such as vinblastine and vincristine. Also able to hydroxylate in vitro nerol and to catalyze 3'-hydroxylation of the flavanone naringenin to form eriodictyol. No activity with apigenin, kaempferol, p-coumaric acid and ferulic acid as substrates.</text>
</comment>
<comment type="catalytic activity">
    <reaction evidence="3 6">
        <text>(2E)-geraniol + reduced [NADPH--hemoprotein reductase] + O2 = (6E)-8-hydroxygeraniol + oxidized [NADPH--hemoprotein reductase] + H2O + H(+)</text>
        <dbReference type="Rhea" id="RHEA:32495"/>
        <dbReference type="Rhea" id="RHEA-COMP:11964"/>
        <dbReference type="Rhea" id="RHEA-COMP:11965"/>
        <dbReference type="ChEBI" id="CHEBI:15377"/>
        <dbReference type="ChEBI" id="CHEBI:15378"/>
        <dbReference type="ChEBI" id="CHEBI:15379"/>
        <dbReference type="ChEBI" id="CHEBI:17447"/>
        <dbReference type="ChEBI" id="CHEBI:57618"/>
        <dbReference type="ChEBI" id="CHEBI:58210"/>
        <dbReference type="ChEBI" id="CHEBI:64235"/>
        <dbReference type="EC" id="1.14.14.83"/>
    </reaction>
</comment>
<comment type="cofactor">
    <cofactor evidence="1">
        <name>heme</name>
        <dbReference type="ChEBI" id="CHEBI:30413"/>
    </cofactor>
</comment>
<comment type="biophysicochemical properties">
    <kinetics>
        <KM evidence="6">15.81 uM for geraniol</KM>
        <KM evidence="6">58.39 uM for naringenin</KM>
        <text>kcat is 3.15 min(-1) for naringenin. kcat is 7.86 min(-1) for geraniol.</text>
    </kinetics>
</comment>
<comment type="subcellular location">
    <subcellularLocation>
        <location evidence="5">Endoplasmic reticulum membrane</location>
        <topology evidence="5">Single-pass membrane protein</topology>
    </subcellularLocation>
    <text>The N-terminal transmembrane helix is necessary and sufficient for endoplasmic reticulum targeting.</text>
</comment>
<comment type="tissue specificity">
    <text evidence="4">Expressed in roots, stems, leaves and flower buds. Hardly detected in mature flowers and fruits. Expressed in the internal phloem-associated parenchyma.</text>
</comment>
<comment type="induction">
    <text evidence="3">Up-regulated by methyl jasmonate treatment.</text>
</comment>
<comment type="miscellaneous">
    <text>The recommended numbering of geraniol gives (6E)-8-hydroxygeraniol as the product rather than 10-hydroxygeraniol as used in most publications.</text>
</comment>
<comment type="similarity">
    <text evidence="8">Belongs to the cytochrome P450 family.</text>
</comment>
<keyword id="KW-0903">Direct protein sequencing</keyword>
<keyword id="KW-0256">Endoplasmic reticulum</keyword>
<keyword id="KW-0349">Heme</keyword>
<keyword id="KW-0408">Iron</keyword>
<keyword id="KW-0472">Membrane</keyword>
<keyword id="KW-0479">Metal-binding</keyword>
<keyword id="KW-0503">Monooxygenase</keyword>
<keyword id="KW-0521">NADP</keyword>
<keyword id="KW-0560">Oxidoreductase</keyword>
<keyword id="KW-0812">Transmembrane</keyword>
<keyword id="KW-1133">Transmembrane helix</keyword>
<organism>
    <name type="scientific">Catharanthus roseus</name>
    <name type="common">Madagascar periwinkle</name>
    <name type="synonym">Vinca rosea</name>
    <dbReference type="NCBI Taxonomy" id="4058"/>
    <lineage>
        <taxon>Eukaryota</taxon>
        <taxon>Viridiplantae</taxon>
        <taxon>Streptophyta</taxon>
        <taxon>Embryophyta</taxon>
        <taxon>Tracheophyta</taxon>
        <taxon>Spermatophyta</taxon>
        <taxon>Magnoliopsida</taxon>
        <taxon>eudicotyledons</taxon>
        <taxon>Gunneridae</taxon>
        <taxon>Pentapetalae</taxon>
        <taxon>asterids</taxon>
        <taxon>lamiids</taxon>
        <taxon>Gentianales</taxon>
        <taxon>Apocynaceae</taxon>
        <taxon>Rauvolfioideae</taxon>
        <taxon>Vinceae</taxon>
        <taxon>Catharanthinae</taxon>
        <taxon>Catharanthus</taxon>
    </lineage>
</organism>